<sequence length="1135" mass="124903">MKFGESLQLALIPEFAEQYVDYNGIKRKIQLVAALPEDERKKLLRRNSDGSWPKGSIDEMLENDLQKVVNLFNTRIVQLDNYVTRLSTEKSPNTEITQALSSSYEAEEKAKQLKELDFRLQQLSSFCEWNKLAFEKLAANMDKHLGTERLVTFYEQKVCKLDFANSSKIYESMIALKALNSSQNDSEVKDKLEKLSIHHPLKKDLLAFIQLDIAAEVVTACINAPDSVLVDILAASIIAGAKACMREVIGRIGLRSECLASALRRAINNLCGPDEGVLYFLEVLKQICSVVYVDSYHSNRLLSRILLVERNSKGQSVMHSVAKLGWAGLCSKFCEIVSSIPDSEPLNWMLPCWRDVMHDTPLTLAIKGNHVEALHALLSAQDKETTSTKPGPVPPLVLTCCVGDYDLIVEELILAGFNPNEVDASSNTALHTAVRYNRPECVKMLLKLGANPSARDFLNSWTPLMLASATGLSEIVSILVASGASVDEVDSSGWTAMEQAVVRGYLHLADKLRTQVALSDKPVNLHTLYIKASSSEMRSRKRAMDLQLSRSVVIIRISDLAGRIRVSLQGDDAVYVSGRSPSFAASRPSSVDFMSQSTDSLSKNDTTASNGSMTPSSSQNNSVIIDIPRSHFDNAGEVCLENLAEPDEIADDSIHLHYDAAQENSPQPVNGSSPPYELVFVTRNTEEATITIDLLANRSHKILGRTVCCLTSLVSDLGNHMQSLKPLAPLPLLSSKTLKPIAHVNADVLISKVTVDDRFSSNDGISTPALSLEAVSNVSRTALEDAERSLHKSATTTSESGKSNGVAVIGHRGLGKNQPDRLSLQLGENTLQSFIKAADLGASYVELDVQMTKDMVPVVYHDFIVNETGTDAQVHSLTLEQFLGASHSPSEEIKDDASDIQQKRRPRAYSSSFTPSGSQVNFGEFAEENARLKPKVYKGNALGHTICAPFTTLKDVLKEVPQSVGLNVEFKYPMLSEAEEEKLLPIAYDYNFYVDTILSIIKKYGGKRKYIFSSFNPDICILLSLKSTNPVLFLTEGGTAYRTDVRAASLRQALKFASQWSFLGIVSACEPLIMCPRLIKAVKQLGLSCYTYGVLNNDVDNVRRQVRFGVDAVIVDNVLAIRRALNQYDESLESD</sequence>
<keyword id="KW-0040">ANK repeat</keyword>
<keyword id="KW-0963">Cytoplasm</keyword>
<keyword id="KW-0378">Hydrolase</keyword>
<keyword id="KW-0597">Phosphoprotein</keyword>
<keyword id="KW-1185">Reference proteome</keyword>
<keyword id="KW-0677">Repeat</keyword>
<reference key="1">
    <citation type="journal article" date="2002" name="Nature">
        <title>The genome sequence of Schizosaccharomyces pombe.</title>
        <authorList>
            <person name="Wood V."/>
            <person name="Gwilliam R."/>
            <person name="Rajandream M.A."/>
            <person name="Lyne M.H."/>
            <person name="Lyne R."/>
            <person name="Stewart A."/>
            <person name="Sgouros J.G."/>
            <person name="Peat N."/>
            <person name="Hayles J."/>
            <person name="Baker S.G."/>
            <person name="Basham D."/>
            <person name="Bowman S."/>
            <person name="Brooks K."/>
            <person name="Brown D."/>
            <person name="Brown S."/>
            <person name="Chillingworth T."/>
            <person name="Churcher C.M."/>
            <person name="Collins M."/>
            <person name="Connor R."/>
            <person name="Cronin A."/>
            <person name="Davis P."/>
            <person name="Feltwell T."/>
            <person name="Fraser A."/>
            <person name="Gentles S."/>
            <person name="Goble A."/>
            <person name="Hamlin N."/>
            <person name="Harris D.E."/>
            <person name="Hidalgo J."/>
            <person name="Hodgson G."/>
            <person name="Holroyd S."/>
            <person name="Hornsby T."/>
            <person name="Howarth S."/>
            <person name="Huckle E.J."/>
            <person name="Hunt S."/>
            <person name="Jagels K."/>
            <person name="James K.D."/>
            <person name="Jones L."/>
            <person name="Jones M."/>
            <person name="Leather S."/>
            <person name="McDonald S."/>
            <person name="McLean J."/>
            <person name="Mooney P."/>
            <person name="Moule S."/>
            <person name="Mungall K.L."/>
            <person name="Murphy L.D."/>
            <person name="Niblett D."/>
            <person name="Odell C."/>
            <person name="Oliver K."/>
            <person name="O'Neil S."/>
            <person name="Pearson D."/>
            <person name="Quail M.A."/>
            <person name="Rabbinowitsch E."/>
            <person name="Rutherford K.M."/>
            <person name="Rutter S."/>
            <person name="Saunders D."/>
            <person name="Seeger K."/>
            <person name="Sharp S."/>
            <person name="Skelton J."/>
            <person name="Simmonds M.N."/>
            <person name="Squares R."/>
            <person name="Squares S."/>
            <person name="Stevens K."/>
            <person name="Taylor K."/>
            <person name="Taylor R.G."/>
            <person name="Tivey A."/>
            <person name="Walsh S.V."/>
            <person name="Warren T."/>
            <person name="Whitehead S."/>
            <person name="Woodward J.R."/>
            <person name="Volckaert G."/>
            <person name="Aert R."/>
            <person name="Robben J."/>
            <person name="Grymonprez B."/>
            <person name="Weltjens I."/>
            <person name="Vanstreels E."/>
            <person name="Rieger M."/>
            <person name="Schaefer M."/>
            <person name="Mueller-Auer S."/>
            <person name="Gabel C."/>
            <person name="Fuchs M."/>
            <person name="Duesterhoeft A."/>
            <person name="Fritzc C."/>
            <person name="Holzer E."/>
            <person name="Moestl D."/>
            <person name="Hilbert H."/>
            <person name="Borzym K."/>
            <person name="Langer I."/>
            <person name="Beck A."/>
            <person name="Lehrach H."/>
            <person name="Reinhardt R."/>
            <person name="Pohl T.M."/>
            <person name="Eger P."/>
            <person name="Zimmermann W."/>
            <person name="Wedler H."/>
            <person name="Wambutt R."/>
            <person name="Purnelle B."/>
            <person name="Goffeau A."/>
            <person name="Cadieu E."/>
            <person name="Dreano S."/>
            <person name="Gloux S."/>
            <person name="Lelaure V."/>
            <person name="Mottier S."/>
            <person name="Galibert F."/>
            <person name="Aves S.J."/>
            <person name="Xiang Z."/>
            <person name="Hunt C."/>
            <person name="Moore K."/>
            <person name="Hurst S.M."/>
            <person name="Lucas M."/>
            <person name="Rochet M."/>
            <person name="Gaillardin C."/>
            <person name="Tallada V.A."/>
            <person name="Garzon A."/>
            <person name="Thode G."/>
            <person name="Daga R.R."/>
            <person name="Cruzado L."/>
            <person name="Jimenez J."/>
            <person name="Sanchez M."/>
            <person name="del Rey F."/>
            <person name="Benito J."/>
            <person name="Dominguez A."/>
            <person name="Revuelta J.L."/>
            <person name="Moreno S."/>
            <person name="Armstrong J."/>
            <person name="Forsburg S.L."/>
            <person name="Cerutti L."/>
            <person name="Lowe T."/>
            <person name="McCombie W.R."/>
            <person name="Paulsen I."/>
            <person name="Potashkin J."/>
            <person name="Shpakovski G.V."/>
            <person name="Ussery D."/>
            <person name="Barrell B.G."/>
            <person name="Nurse P."/>
        </authorList>
    </citation>
    <scope>NUCLEOTIDE SEQUENCE [LARGE SCALE GENOMIC DNA]</scope>
    <source>
        <strain>972 / ATCC 24843</strain>
    </source>
</reference>
<reference key="2">
    <citation type="journal article" date="1997" name="DNA Res.">
        <title>Identification of open reading frames in Schizosaccharomyces pombe cDNAs.</title>
        <authorList>
            <person name="Yoshioka S."/>
            <person name="Kato K."/>
            <person name="Nakai K."/>
            <person name="Okayama H."/>
            <person name="Nojima H."/>
        </authorList>
    </citation>
    <scope>NUCLEOTIDE SEQUENCE [LARGE SCALE MRNA] OF 721-1135</scope>
    <source>
        <strain>PR745</strain>
    </source>
</reference>
<reference key="3">
    <citation type="journal article" date="2006" name="Nat. Biotechnol.">
        <title>ORFeome cloning and global analysis of protein localization in the fission yeast Schizosaccharomyces pombe.</title>
        <authorList>
            <person name="Matsuyama A."/>
            <person name="Arai R."/>
            <person name="Yashiroda Y."/>
            <person name="Shirai A."/>
            <person name="Kamata A."/>
            <person name="Sekido S."/>
            <person name="Kobayashi Y."/>
            <person name="Hashimoto A."/>
            <person name="Hamamoto M."/>
            <person name="Hiraoka Y."/>
            <person name="Horinouchi S."/>
            <person name="Yoshida M."/>
        </authorList>
    </citation>
    <scope>SUBCELLULAR LOCATION [LARGE SCALE ANALYSIS]</scope>
</reference>
<reference key="4">
    <citation type="journal article" date="2008" name="J. Proteome Res.">
        <title>Phosphoproteome analysis of fission yeast.</title>
        <authorList>
            <person name="Wilson-Grady J.T."/>
            <person name="Villen J."/>
            <person name="Gygi S.P."/>
        </authorList>
    </citation>
    <scope>PHOSPHORYLATION [LARGE SCALE ANALYSIS] AT SER-580; SER-582; SER-910; SER-911 AND SER-912</scope>
    <scope>IDENTIFICATION BY MASS SPECTROMETRY</scope>
</reference>
<comment type="function">
    <text evidence="1">Glycerophosphocholine glycerophosphodiesterase responsible for the hydrolysis of intracellular glycerophosphocholine into glycerol-phosphate and choline. The choline is used for phosphatidyl-choline synthesis. Required for utilization of glycerophosphocholine as phosphate source.</text>
</comment>
<comment type="catalytic activity">
    <reaction evidence="1">
        <text>sn-glycerol 3-phosphocholine + H2O = sn-glycerol 3-phosphate + choline + H(+)</text>
        <dbReference type="Rhea" id="RHEA:16061"/>
        <dbReference type="ChEBI" id="CHEBI:15354"/>
        <dbReference type="ChEBI" id="CHEBI:15377"/>
        <dbReference type="ChEBI" id="CHEBI:15378"/>
        <dbReference type="ChEBI" id="CHEBI:16870"/>
        <dbReference type="ChEBI" id="CHEBI:57597"/>
        <dbReference type="EC" id="3.1.4.2"/>
    </reaction>
    <physiologicalReaction direction="left-to-right" evidence="1">
        <dbReference type="Rhea" id="RHEA:16062"/>
    </physiologicalReaction>
</comment>
<comment type="cofactor">
    <cofactor evidence="4">
        <name>a divalent metal cation</name>
        <dbReference type="ChEBI" id="CHEBI:60240"/>
    </cofactor>
</comment>
<comment type="subcellular location">
    <subcellularLocation>
        <location evidence="6">Cytoplasm</location>
    </subcellularLocation>
</comment>
<comment type="similarity">
    <text evidence="8">Belongs to the GDE1 family.</text>
</comment>
<feature type="chain" id="PRO_0000067250" description="Glycerophosphocholine phosphodiesterase gde1">
    <location>
        <begin position="1"/>
        <end position="1135"/>
    </location>
</feature>
<feature type="domain" description="SPX" evidence="3">
    <location>
        <begin position="60"/>
        <end position="155"/>
    </location>
</feature>
<feature type="repeat" description="ANK 1" evidence="2">
    <location>
        <begin position="357"/>
        <end position="386"/>
    </location>
</feature>
<feature type="repeat" description="ANK 2" evidence="2">
    <location>
        <begin position="391"/>
        <end position="421"/>
    </location>
</feature>
<feature type="repeat" description="ANK 3" evidence="2">
    <location>
        <begin position="425"/>
        <end position="454"/>
    </location>
</feature>
<feature type="repeat" description="ANK 4" evidence="2">
    <location>
        <begin position="459"/>
        <end position="488"/>
    </location>
</feature>
<feature type="repeat" description="ANK 5" evidence="2">
    <location>
        <begin position="492"/>
        <end position="521"/>
    </location>
</feature>
<feature type="domain" description="GP-PDE" evidence="4">
    <location>
        <begin position="806"/>
        <end position="1125"/>
    </location>
</feature>
<feature type="region of interest" description="Disordered" evidence="5">
    <location>
        <begin position="583"/>
        <end position="621"/>
    </location>
</feature>
<feature type="region of interest" description="Disordered" evidence="5">
    <location>
        <begin position="786"/>
        <end position="821"/>
    </location>
</feature>
<feature type="region of interest" description="Disordered" evidence="5">
    <location>
        <begin position="888"/>
        <end position="915"/>
    </location>
</feature>
<feature type="compositionally biased region" description="Polar residues" evidence="5">
    <location>
        <begin position="592"/>
        <end position="621"/>
    </location>
</feature>
<feature type="compositionally biased region" description="Polar residues" evidence="5">
    <location>
        <begin position="792"/>
        <end position="803"/>
    </location>
</feature>
<feature type="binding site" evidence="4">
    <location>
        <position position="846"/>
    </location>
    <ligand>
        <name>a divalent metal cation</name>
        <dbReference type="ChEBI" id="CHEBI:60240"/>
    </ligand>
</feature>
<feature type="binding site" evidence="4">
    <location>
        <position position="848"/>
    </location>
    <ligand>
        <name>a divalent metal cation</name>
        <dbReference type="ChEBI" id="CHEBI:60240"/>
    </ligand>
</feature>
<feature type="binding site" evidence="4">
    <location>
        <position position="861"/>
    </location>
    <ligand>
        <name>a divalent metal cation</name>
        <dbReference type="ChEBI" id="CHEBI:60240"/>
    </ligand>
</feature>
<feature type="modified residue" description="Phosphoserine" evidence="7">
    <location>
        <position position="580"/>
    </location>
</feature>
<feature type="modified residue" description="Phosphoserine" evidence="7">
    <location>
        <position position="582"/>
    </location>
</feature>
<feature type="modified residue" description="Phosphoserine" evidence="7">
    <location>
        <position position="910"/>
    </location>
</feature>
<feature type="modified residue" description="Phosphoserine" evidence="7">
    <location>
        <position position="911"/>
    </location>
</feature>
<feature type="modified residue" description="Phosphoserine" evidence="7">
    <location>
        <position position="912"/>
    </location>
</feature>
<feature type="sequence conflict" description="In Ref. 2; BAA13795." evidence="8" ref="2">
    <original>A</original>
    <variation>E</variation>
    <location>
        <position position="728"/>
    </location>
</feature>
<feature type="sequence conflict" description="In Ref. 2; BAA13795." evidence="8" ref="2">
    <original>E</original>
    <variation>G</variation>
    <location>
        <position position="927"/>
    </location>
</feature>
<feature type="sequence conflict" description="In Ref. 2; BAA13795." evidence="8" ref="2">
    <original>F</original>
    <variation>S</variation>
    <location>
        <position position="950"/>
    </location>
</feature>
<evidence type="ECO:0000250" key="1">
    <source>
        <dbReference type="UniProtKB" id="Q02979"/>
    </source>
</evidence>
<evidence type="ECO:0000255" key="2"/>
<evidence type="ECO:0000255" key="3">
    <source>
        <dbReference type="PROSITE-ProRule" id="PRU00714"/>
    </source>
</evidence>
<evidence type="ECO:0000255" key="4">
    <source>
        <dbReference type="PROSITE-ProRule" id="PRU01041"/>
    </source>
</evidence>
<evidence type="ECO:0000256" key="5">
    <source>
        <dbReference type="SAM" id="MobiDB-lite"/>
    </source>
</evidence>
<evidence type="ECO:0000269" key="6">
    <source>
    </source>
</evidence>
<evidence type="ECO:0000269" key="7">
    <source>
    </source>
</evidence>
<evidence type="ECO:0000305" key="8"/>
<evidence type="ECO:0000312" key="9">
    <source>
        <dbReference type="PomBase" id="SPAPB1E7.05"/>
    </source>
</evidence>
<organism>
    <name type="scientific">Schizosaccharomyces pombe (strain 972 / ATCC 24843)</name>
    <name type="common">Fission yeast</name>
    <dbReference type="NCBI Taxonomy" id="284812"/>
    <lineage>
        <taxon>Eukaryota</taxon>
        <taxon>Fungi</taxon>
        <taxon>Dikarya</taxon>
        <taxon>Ascomycota</taxon>
        <taxon>Taphrinomycotina</taxon>
        <taxon>Schizosaccharomycetes</taxon>
        <taxon>Schizosaccharomycetales</taxon>
        <taxon>Schizosaccharomycetaceae</taxon>
        <taxon>Schizosaccharomyces</taxon>
    </lineage>
</organism>
<name>GDE1_SCHPO</name>
<dbReference type="EC" id="3.1.4.2" evidence="1"/>
<dbReference type="EMBL" id="CU329670">
    <property type="protein sequence ID" value="CAK9838371.1"/>
    <property type="molecule type" value="Genomic_DNA"/>
</dbReference>
<dbReference type="EMBL" id="D89133">
    <property type="protein sequence ID" value="BAA13795.1"/>
    <property type="molecule type" value="mRNA"/>
</dbReference>
<dbReference type="PIR" id="T42379">
    <property type="entry name" value="T42379"/>
</dbReference>
<dbReference type="SMR" id="Q9C104"/>
<dbReference type="BioGRID" id="280091">
    <property type="interactions" value="4"/>
</dbReference>
<dbReference type="FunCoup" id="Q9C104">
    <property type="interactions" value="66"/>
</dbReference>
<dbReference type="STRING" id="284812.Q9C104"/>
<dbReference type="iPTMnet" id="Q9C104"/>
<dbReference type="PaxDb" id="4896-SPAPB1E7.05.1"/>
<dbReference type="EnsemblFungi" id="SPAPB1E7.05.1">
    <property type="protein sequence ID" value="SPAPB1E7.05.1:pep"/>
    <property type="gene ID" value="SPAPB1E7.05"/>
</dbReference>
<dbReference type="PomBase" id="SPAPB1E7.05">
    <property type="gene designation" value="gde1"/>
</dbReference>
<dbReference type="VEuPathDB" id="FungiDB:SPAPB1E7.05"/>
<dbReference type="eggNOG" id="KOG0504">
    <property type="taxonomic scope" value="Eukaryota"/>
</dbReference>
<dbReference type="eggNOG" id="KOG2421">
    <property type="taxonomic scope" value="Eukaryota"/>
</dbReference>
<dbReference type="HOGENOM" id="CLU_005444_1_0_1"/>
<dbReference type="InParanoid" id="Q9C104"/>
<dbReference type="OMA" id="AKACMRE"/>
<dbReference type="PhylomeDB" id="Q9C104"/>
<dbReference type="PRO" id="PR:Q9C104"/>
<dbReference type="Proteomes" id="UP000002485">
    <property type="component" value="Chromosome I"/>
</dbReference>
<dbReference type="GO" id="GO:0005737">
    <property type="term" value="C:cytoplasm"/>
    <property type="evidence" value="ECO:0007005"/>
    <property type="project" value="PomBase"/>
</dbReference>
<dbReference type="GO" id="GO:0005829">
    <property type="term" value="C:cytosol"/>
    <property type="evidence" value="ECO:0007005"/>
    <property type="project" value="PomBase"/>
</dbReference>
<dbReference type="GO" id="GO:0047389">
    <property type="term" value="F:glycerophosphocholine phosphodiesterase activity"/>
    <property type="evidence" value="ECO:0000318"/>
    <property type="project" value="GO_Central"/>
</dbReference>
<dbReference type="GO" id="GO:0008081">
    <property type="term" value="F:phosphoric diester hydrolase activity"/>
    <property type="evidence" value="ECO:0007669"/>
    <property type="project" value="InterPro"/>
</dbReference>
<dbReference type="GO" id="GO:0046475">
    <property type="term" value="P:glycerophospholipid catabolic process"/>
    <property type="evidence" value="ECO:0000318"/>
    <property type="project" value="GO_Central"/>
</dbReference>
<dbReference type="GO" id="GO:0006629">
    <property type="term" value="P:lipid metabolic process"/>
    <property type="evidence" value="ECO:0007669"/>
    <property type="project" value="InterPro"/>
</dbReference>
<dbReference type="CDD" id="cd08606">
    <property type="entry name" value="GDPD_YPL110cp_fungi"/>
    <property type="match status" value="1"/>
</dbReference>
<dbReference type="CDD" id="cd14447">
    <property type="entry name" value="SPX"/>
    <property type="match status" value="1"/>
</dbReference>
<dbReference type="Gene3D" id="1.25.40.20">
    <property type="entry name" value="Ankyrin repeat-containing domain"/>
    <property type="match status" value="1"/>
</dbReference>
<dbReference type="Gene3D" id="3.20.20.190">
    <property type="entry name" value="Phosphatidylinositol (PI) phosphodiesterase"/>
    <property type="match status" value="1"/>
</dbReference>
<dbReference type="InterPro" id="IPR002110">
    <property type="entry name" value="Ankyrin_rpt"/>
</dbReference>
<dbReference type="InterPro" id="IPR036770">
    <property type="entry name" value="Ankyrin_rpt-contain_sf"/>
</dbReference>
<dbReference type="InterPro" id="IPR051578">
    <property type="entry name" value="GDPD"/>
</dbReference>
<dbReference type="InterPro" id="IPR030395">
    <property type="entry name" value="GP_PDE_dom"/>
</dbReference>
<dbReference type="InterPro" id="IPR017946">
    <property type="entry name" value="PLC-like_Pdiesterase_TIM-brl"/>
</dbReference>
<dbReference type="InterPro" id="IPR004331">
    <property type="entry name" value="SPX_dom"/>
</dbReference>
<dbReference type="PANTHER" id="PTHR22958:SF1">
    <property type="entry name" value="GLYCEROPHOSPHOCHOLINE PHOSPHODIESTERASE GPCPD1"/>
    <property type="match status" value="1"/>
</dbReference>
<dbReference type="PANTHER" id="PTHR22958">
    <property type="entry name" value="GLYCEROPHOSPHORYL DIESTER PHOSPHODIESTERASE"/>
    <property type="match status" value="1"/>
</dbReference>
<dbReference type="Pfam" id="PF13857">
    <property type="entry name" value="Ank_5"/>
    <property type="match status" value="1"/>
</dbReference>
<dbReference type="Pfam" id="PF25329">
    <property type="entry name" value="C2_GDE1"/>
    <property type="match status" value="1"/>
</dbReference>
<dbReference type="Pfam" id="PF03009">
    <property type="entry name" value="GDPD"/>
    <property type="match status" value="1"/>
</dbReference>
<dbReference type="SMART" id="SM00248">
    <property type="entry name" value="ANK"/>
    <property type="match status" value="4"/>
</dbReference>
<dbReference type="SUPFAM" id="SSF48403">
    <property type="entry name" value="Ankyrin repeat"/>
    <property type="match status" value="1"/>
</dbReference>
<dbReference type="SUPFAM" id="SSF51695">
    <property type="entry name" value="PLC-like phosphodiesterases"/>
    <property type="match status" value="1"/>
</dbReference>
<dbReference type="PROSITE" id="PS50297">
    <property type="entry name" value="ANK_REP_REGION"/>
    <property type="match status" value="1"/>
</dbReference>
<dbReference type="PROSITE" id="PS50088">
    <property type="entry name" value="ANK_REPEAT"/>
    <property type="match status" value="2"/>
</dbReference>
<dbReference type="PROSITE" id="PS51704">
    <property type="entry name" value="GP_PDE"/>
    <property type="match status" value="1"/>
</dbReference>
<dbReference type="PROSITE" id="PS51382">
    <property type="entry name" value="SPX"/>
    <property type="match status" value="1"/>
</dbReference>
<proteinExistence type="evidence at protein level"/>
<gene>
    <name type="primary">gde1</name>
    <name evidence="9" type="ORF">SPAPB1E7.05</name>
</gene>
<accession>Q9C104</accession>
<accession>A0AAN2L3X1</accession>
<accession>P78784</accession>
<protein>
    <recommendedName>
        <fullName>Glycerophosphocholine phosphodiesterase gde1</fullName>
        <ecNumber evidence="1">3.1.4.2</ecNumber>
    </recommendedName>
    <alternativeName>
        <fullName>Glycerophosphodiester phosphodiesterase gde1</fullName>
    </alternativeName>
</protein>